<gene>
    <name type="primary">GTF2IRD2B</name>
</gene>
<organism>
    <name type="scientific">Homo sapiens</name>
    <name type="common">Human</name>
    <dbReference type="NCBI Taxonomy" id="9606"/>
    <lineage>
        <taxon>Eukaryota</taxon>
        <taxon>Metazoa</taxon>
        <taxon>Chordata</taxon>
        <taxon>Craniata</taxon>
        <taxon>Vertebrata</taxon>
        <taxon>Euteleostomi</taxon>
        <taxon>Mammalia</taxon>
        <taxon>Eutheria</taxon>
        <taxon>Euarchontoglires</taxon>
        <taxon>Primates</taxon>
        <taxon>Haplorrhini</taxon>
        <taxon>Catarrhini</taxon>
        <taxon>Hominidae</taxon>
        <taxon>Homo</taxon>
    </lineage>
</organism>
<dbReference type="EMBL" id="AY312850">
    <property type="protein sequence ID" value="AAR36863.1"/>
    <property type="molecule type" value="mRNA"/>
</dbReference>
<dbReference type="EMBL" id="AY312851">
    <property type="protein sequence ID" value="AAR36864.1"/>
    <property type="molecule type" value="mRNA"/>
</dbReference>
<dbReference type="EMBL" id="AK025076">
    <property type="protein sequence ID" value="BAB15060.1"/>
    <property type="status" value="ALT_INIT"/>
    <property type="molecule type" value="mRNA"/>
</dbReference>
<dbReference type="EMBL" id="BC136849">
    <property type="protein sequence ID" value="AAI36850.1"/>
    <property type="molecule type" value="mRNA"/>
</dbReference>
<dbReference type="EMBL" id="AK095572">
    <property type="protein sequence ID" value="BAC04576.1"/>
    <property type="status" value="ALT_INIT"/>
    <property type="molecule type" value="mRNA"/>
</dbReference>
<dbReference type="CCDS" id="CCDS34659.1">
    <molecule id="Q6EKJ0-1"/>
</dbReference>
<dbReference type="RefSeq" id="NP_001003795.1">
    <molecule id="Q6EKJ0-1"/>
    <property type="nucleotide sequence ID" value="NM_001003795.3"/>
</dbReference>
<dbReference type="PDB" id="2E3L">
    <property type="method" value="NMR"/>
    <property type="chains" value="A=107-192"/>
</dbReference>
<dbReference type="PDBsum" id="2E3L"/>
<dbReference type="SMR" id="Q6EKJ0"/>
<dbReference type="BioGRID" id="133172">
    <property type="interactions" value="15"/>
</dbReference>
<dbReference type="FunCoup" id="Q6EKJ0">
    <property type="interactions" value="1146"/>
</dbReference>
<dbReference type="IntAct" id="Q6EKJ0">
    <property type="interactions" value="11"/>
</dbReference>
<dbReference type="STRING" id="9606.ENSP00000480524"/>
<dbReference type="GlyGen" id="Q6EKJ0">
    <property type="glycosylation" value="1 site"/>
</dbReference>
<dbReference type="iPTMnet" id="Q6EKJ0"/>
<dbReference type="PhosphoSitePlus" id="Q6EKJ0"/>
<dbReference type="BioMuta" id="GTF2IRD2B"/>
<dbReference type="DMDM" id="74709247"/>
<dbReference type="jPOST" id="Q6EKJ0"/>
<dbReference type="MassIVE" id="Q6EKJ0"/>
<dbReference type="PaxDb" id="9606-ENSP00000480524"/>
<dbReference type="PeptideAtlas" id="Q6EKJ0"/>
<dbReference type="ProteomicsDB" id="66283">
    <molecule id="Q6EKJ0-1"/>
</dbReference>
<dbReference type="ProteomicsDB" id="66284">
    <molecule id="Q6EKJ0-2"/>
</dbReference>
<dbReference type="Antibodypedia" id="67942">
    <property type="antibodies" value="63 antibodies from 14 providers"/>
</dbReference>
<dbReference type="DNASU" id="389524"/>
<dbReference type="Ensembl" id="ENST00000418185.6">
    <molecule id="Q6EKJ0-2"/>
    <property type="protein sequence ID" value="ENSP00000411454.3"/>
    <property type="gene ID" value="ENSG00000174428.19"/>
</dbReference>
<dbReference type="Ensembl" id="ENST00000472837.7">
    <molecule id="Q6EKJ0-1"/>
    <property type="protein sequence ID" value="ENSP00000480524.1"/>
    <property type="gene ID" value="ENSG00000174428.19"/>
</dbReference>
<dbReference type="GeneID" id="389524"/>
<dbReference type="KEGG" id="hsa:389524"/>
<dbReference type="MANE-Select" id="ENST00000472837.7">
    <property type="protein sequence ID" value="ENSP00000480524.1"/>
    <property type="RefSeq nucleotide sequence ID" value="NM_001003795.3"/>
    <property type="RefSeq protein sequence ID" value="NP_001003795.1"/>
</dbReference>
<dbReference type="UCSC" id="uc003ubt.4">
    <molecule id="Q6EKJ0-1"/>
    <property type="organism name" value="human"/>
</dbReference>
<dbReference type="AGR" id="HGNC:33125"/>
<dbReference type="CTD" id="389524"/>
<dbReference type="GeneCards" id="GTF2IRD2B"/>
<dbReference type="HGNC" id="HGNC:33125">
    <property type="gene designation" value="GTF2IRD2B"/>
</dbReference>
<dbReference type="HPA" id="ENSG00000174428">
    <property type="expression patterns" value="Low tissue specificity"/>
</dbReference>
<dbReference type="MIM" id="608900">
    <property type="type" value="gene"/>
</dbReference>
<dbReference type="neXtProt" id="NX_Q6EKJ0"/>
<dbReference type="PharmGKB" id="PA162390444"/>
<dbReference type="VEuPathDB" id="HostDB:ENSG00000174428"/>
<dbReference type="eggNOG" id="ENOG502QS6T">
    <property type="taxonomic scope" value="Eukaryota"/>
</dbReference>
<dbReference type="GeneTree" id="ENSGT00940000162266"/>
<dbReference type="HOGENOM" id="CLU_310345_0_0_1"/>
<dbReference type="InParanoid" id="Q6EKJ0"/>
<dbReference type="OrthoDB" id="10061052at2759"/>
<dbReference type="PAN-GO" id="Q6EKJ0">
    <property type="GO annotations" value="1 GO annotation based on evolutionary models"/>
</dbReference>
<dbReference type="PhylomeDB" id="Q6EKJ0"/>
<dbReference type="TreeFam" id="TF352524"/>
<dbReference type="PathwayCommons" id="Q6EKJ0"/>
<dbReference type="SignaLink" id="Q6EKJ0"/>
<dbReference type="BioGRID-ORCS" id="389524">
    <property type="hits" value="139 hits in 673 CRISPR screens"/>
</dbReference>
<dbReference type="ChiTaRS" id="GTF2IRD2B">
    <property type="organism name" value="human"/>
</dbReference>
<dbReference type="EvolutionaryTrace" id="Q6EKJ0"/>
<dbReference type="GenomeRNAi" id="389524"/>
<dbReference type="Pharos" id="Q6EKJ0">
    <property type="development level" value="Tbio"/>
</dbReference>
<dbReference type="PRO" id="PR:Q6EKJ0"/>
<dbReference type="Proteomes" id="UP000005640">
    <property type="component" value="Chromosome 7"/>
</dbReference>
<dbReference type="RNAct" id="Q6EKJ0">
    <property type="molecule type" value="protein"/>
</dbReference>
<dbReference type="Bgee" id="ENSG00000174428">
    <property type="expression patterns" value="Expressed in hindlimb stylopod muscle and 97 other cell types or tissues"/>
</dbReference>
<dbReference type="ExpressionAtlas" id="Q6EKJ0">
    <property type="expression patterns" value="baseline and differential"/>
</dbReference>
<dbReference type="GO" id="GO:0005634">
    <property type="term" value="C:nucleus"/>
    <property type="evidence" value="ECO:0000318"/>
    <property type="project" value="GO_Central"/>
</dbReference>
<dbReference type="GO" id="GO:0003677">
    <property type="term" value="F:DNA binding"/>
    <property type="evidence" value="ECO:0007669"/>
    <property type="project" value="UniProtKB-KW"/>
</dbReference>
<dbReference type="GO" id="GO:0000981">
    <property type="term" value="F:DNA-binding transcription factor activity, RNA polymerase II-specific"/>
    <property type="evidence" value="ECO:0000303"/>
    <property type="project" value="ARUK-UCL"/>
</dbReference>
<dbReference type="FunFam" id="3.90.1460.10:FF:000002">
    <property type="entry name" value="General transcription factor II-I isoform 1"/>
    <property type="match status" value="1"/>
</dbReference>
<dbReference type="FunFam" id="3.90.1460.10:FF:000003">
    <property type="entry name" value="general transcription factor II-I isoform X1"/>
    <property type="match status" value="1"/>
</dbReference>
<dbReference type="Gene3D" id="3.90.1460.10">
    <property type="entry name" value="GTF2I-like"/>
    <property type="match status" value="2"/>
</dbReference>
<dbReference type="InterPro" id="IPR004212">
    <property type="entry name" value="GTF2I"/>
</dbReference>
<dbReference type="InterPro" id="IPR036647">
    <property type="entry name" value="GTF2I-like_rpt_sf"/>
</dbReference>
<dbReference type="InterPro" id="IPR042224">
    <property type="entry name" value="GTF2IRD2"/>
</dbReference>
<dbReference type="InterPro" id="IPR012337">
    <property type="entry name" value="RNaseH-like_sf"/>
</dbReference>
<dbReference type="PANTHER" id="PTHR47831">
    <property type="entry name" value="GENERAL TRANSCRIPTION FACTOR II-I REPEAT DOMAIN-CONTAINING PROTEIN 2"/>
    <property type="match status" value="1"/>
</dbReference>
<dbReference type="PANTHER" id="PTHR47831:SF1">
    <property type="entry name" value="GENERAL TRANSCRIPTION FACTOR II-I REPEAT DOMAIN-CONTAINING PROTEIN 2A-RELATED"/>
    <property type="match status" value="1"/>
</dbReference>
<dbReference type="Pfam" id="PF02946">
    <property type="entry name" value="GTF2I"/>
    <property type="match status" value="2"/>
</dbReference>
<dbReference type="SUPFAM" id="SSF117773">
    <property type="entry name" value="GTF2I-like repeat"/>
    <property type="match status" value="2"/>
</dbReference>
<dbReference type="SUPFAM" id="SSF53098">
    <property type="entry name" value="Ribonuclease H-like"/>
    <property type="match status" value="1"/>
</dbReference>
<dbReference type="PROSITE" id="PS51139">
    <property type="entry name" value="GTF2I"/>
    <property type="match status" value="2"/>
</dbReference>
<reference key="1">
    <citation type="journal article" date="2004" name="Eur. J. Hum. Genet.">
        <title>Isolation and characterisation of GTF2IRD2, a novel fusion gene and member of the TFII-I family of transcription factors, deleted in Williams-Beuren syndrome.</title>
        <authorList>
            <person name="Tipney H.J."/>
            <person name="Hinsley T.A."/>
            <person name="Brass A."/>
            <person name="Metcalfe K."/>
            <person name="Donnai D."/>
            <person name="Tassabehji M."/>
        </authorList>
    </citation>
    <scope>NUCLEOTIDE SEQUENCE [MRNA] (ISOFORM 1)</scope>
</reference>
<reference key="2">
    <citation type="journal article" date="2004" name="Protein Sci.">
        <title>Comparison of TFII-I gene family members deleted in Williams-Beuren syndrome.</title>
        <authorList>
            <person name="Hinsley T.A."/>
            <person name="Cunliffe P."/>
            <person name="Tipney H.J."/>
            <person name="Brass A."/>
            <person name="Tassabehji M."/>
        </authorList>
    </citation>
    <scope>NUCLEOTIDE SEQUENCE [MRNA] (ISOFORM 2)</scope>
</reference>
<reference key="3">
    <citation type="journal article" date="2004" name="Genome Res.">
        <title>The status, quality, and expansion of the NIH full-length cDNA project: the Mammalian Gene Collection (MGC).</title>
        <authorList>
            <consortium name="The MGC Project Team"/>
        </authorList>
    </citation>
    <scope>NUCLEOTIDE SEQUENCE [LARGE SCALE MRNA] (ISOFORM 1)</scope>
</reference>
<reference key="4">
    <citation type="journal article" date="2004" name="Nat. Genet.">
        <title>Complete sequencing and characterization of 21,243 full-length human cDNAs.</title>
        <authorList>
            <person name="Ota T."/>
            <person name="Suzuki Y."/>
            <person name="Nishikawa T."/>
            <person name="Otsuki T."/>
            <person name="Sugiyama T."/>
            <person name="Irie R."/>
            <person name="Wakamatsu A."/>
            <person name="Hayashi K."/>
            <person name="Sato H."/>
            <person name="Nagai K."/>
            <person name="Kimura K."/>
            <person name="Makita H."/>
            <person name="Sekine M."/>
            <person name="Obayashi M."/>
            <person name="Nishi T."/>
            <person name="Shibahara T."/>
            <person name="Tanaka T."/>
            <person name="Ishii S."/>
            <person name="Yamamoto J."/>
            <person name="Saito K."/>
            <person name="Kawai Y."/>
            <person name="Isono Y."/>
            <person name="Nakamura Y."/>
            <person name="Nagahari K."/>
            <person name="Murakami K."/>
            <person name="Yasuda T."/>
            <person name="Iwayanagi T."/>
            <person name="Wagatsuma M."/>
            <person name="Shiratori A."/>
            <person name="Sudo H."/>
            <person name="Hosoiri T."/>
            <person name="Kaku Y."/>
            <person name="Kodaira H."/>
            <person name="Kondo H."/>
            <person name="Sugawara M."/>
            <person name="Takahashi M."/>
            <person name="Kanda K."/>
            <person name="Yokoi T."/>
            <person name="Furuya T."/>
            <person name="Kikkawa E."/>
            <person name="Omura Y."/>
            <person name="Abe K."/>
            <person name="Kamihara K."/>
            <person name="Katsuta N."/>
            <person name="Sato K."/>
            <person name="Tanikawa M."/>
            <person name="Yamazaki M."/>
            <person name="Ninomiya K."/>
            <person name="Ishibashi T."/>
            <person name="Yamashita H."/>
            <person name="Murakawa K."/>
            <person name="Fujimori K."/>
            <person name="Tanai H."/>
            <person name="Kimata M."/>
            <person name="Watanabe M."/>
            <person name="Hiraoka S."/>
            <person name="Chiba Y."/>
            <person name="Ishida S."/>
            <person name="Ono Y."/>
            <person name="Takiguchi S."/>
            <person name="Watanabe S."/>
            <person name="Yosida M."/>
            <person name="Hotuta T."/>
            <person name="Kusano J."/>
            <person name="Kanehori K."/>
            <person name="Takahashi-Fujii A."/>
            <person name="Hara H."/>
            <person name="Tanase T.-O."/>
            <person name="Nomura Y."/>
            <person name="Togiya S."/>
            <person name="Komai F."/>
            <person name="Hara R."/>
            <person name="Takeuchi K."/>
            <person name="Arita M."/>
            <person name="Imose N."/>
            <person name="Musashino K."/>
            <person name="Yuuki H."/>
            <person name="Oshima A."/>
            <person name="Sasaki N."/>
            <person name="Aotsuka S."/>
            <person name="Yoshikawa Y."/>
            <person name="Matsunawa H."/>
            <person name="Ichihara T."/>
            <person name="Shiohata N."/>
            <person name="Sano S."/>
            <person name="Moriya S."/>
            <person name="Momiyama H."/>
            <person name="Satoh N."/>
            <person name="Takami S."/>
            <person name="Terashima Y."/>
            <person name="Suzuki O."/>
            <person name="Nakagawa S."/>
            <person name="Senoh A."/>
            <person name="Mizoguchi H."/>
            <person name="Goto Y."/>
            <person name="Shimizu F."/>
            <person name="Wakebe H."/>
            <person name="Hishigaki H."/>
            <person name="Watanabe T."/>
            <person name="Sugiyama A."/>
            <person name="Takemoto M."/>
            <person name="Kawakami B."/>
            <person name="Yamazaki M."/>
            <person name="Watanabe K."/>
            <person name="Kumagai A."/>
            <person name="Itakura S."/>
            <person name="Fukuzumi Y."/>
            <person name="Fujimori Y."/>
            <person name="Komiyama M."/>
            <person name="Tashiro H."/>
            <person name="Tanigami A."/>
            <person name="Fujiwara T."/>
            <person name="Ono T."/>
            <person name="Yamada K."/>
            <person name="Fujii Y."/>
            <person name="Ozaki K."/>
            <person name="Hirao M."/>
            <person name="Ohmori Y."/>
            <person name="Kawabata A."/>
            <person name="Hikiji T."/>
            <person name="Kobatake N."/>
            <person name="Inagaki H."/>
            <person name="Ikema Y."/>
            <person name="Okamoto S."/>
            <person name="Okitani R."/>
            <person name="Kawakami T."/>
            <person name="Noguchi S."/>
            <person name="Itoh T."/>
            <person name="Shigeta K."/>
            <person name="Senba T."/>
            <person name="Matsumura K."/>
            <person name="Nakajima Y."/>
            <person name="Mizuno T."/>
            <person name="Morinaga M."/>
            <person name="Sasaki M."/>
            <person name="Togashi T."/>
            <person name="Oyama M."/>
            <person name="Hata H."/>
            <person name="Watanabe M."/>
            <person name="Komatsu T."/>
            <person name="Mizushima-Sugano J."/>
            <person name="Satoh T."/>
            <person name="Shirai Y."/>
            <person name="Takahashi Y."/>
            <person name="Nakagawa K."/>
            <person name="Okumura K."/>
            <person name="Nagase T."/>
            <person name="Nomura N."/>
            <person name="Kikuchi H."/>
            <person name="Masuho Y."/>
            <person name="Yamashita R."/>
            <person name="Nakai K."/>
            <person name="Yada T."/>
            <person name="Nakamura Y."/>
            <person name="Ohara O."/>
            <person name="Isogai T."/>
            <person name="Sugano S."/>
        </authorList>
    </citation>
    <scope>NUCLEOTIDE SEQUENCE [LARGE SCALE MRNA] OF 246-949 (ISOFORM 1)</scope>
    <source>
        <tissue>Brain</tissue>
        <tissue>Colon</tissue>
    </source>
</reference>
<reference key="5">
    <citation type="journal article" date="2006" name="Am. J. Hum. Genet.">
        <title>Hemizygosity at the NCF1 gene in patients with Williams-Beuren syndrome decreases their risk of hypertension.</title>
        <authorList>
            <person name="Del Campo M."/>
            <person name="Antonell A."/>
            <person name="Magano L.F."/>
            <person name="Munoz F.J."/>
            <person name="Flores R."/>
            <person name="Bayes M."/>
            <person name="Perez Jurado L.A."/>
        </authorList>
    </citation>
    <scope>POTENTIAL INVOLVEMENT IN WILLIAMS-BEUREN SYNDROME</scope>
</reference>
<reference key="6">
    <citation type="submission" date="2007-05" db="PDB data bank">
        <title>Solution structure of RSGI RUH-068, a GTF2I domain in human cDNA.</title>
        <authorList>
            <consortium name="RIKEN structural genomics initiative (RSGI)"/>
        </authorList>
    </citation>
    <scope>STRUCTURE BY NMR OF 107-192</scope>
</reference>
<protein>
    <recommendedName>
        <fullName>General transcription factor II-I repeat domain-containing protein 2B</fullName>
        <shortName>GTF2I repeat domain-containing protein 2B</shortName>
    </recommendedName>
    <alternativeName>
        <fullName>Transcription factor GTF2IRD2-beta</fullName>
    </alternativeName>
</protein>
<evidence type="ECO:0000255" key="1">
    <source>
        <dbReference type="PROSITE-ProRule" id="PRU00484"/>
    </source>
</evidence>
<evidence type="ECO:0000269" key="2">
    <source>
    </source>
</evidence>
<evidence type="ECO:0000303" key="3">
    <source>
    </source>
</evidence>
<evidence type="ECO:0000305" key="4"/>
<evidence type="ECO:0007829" key="5">
    <source>
        <dbReference type="PDB" id="2E3L"/>
    </source>
</evidence>
<sequence>MAQVAVSTLPVEEESSSETRMVVTFLVSALESMCKELAKSKAEVACIAVYETDVFVVGTERGCAFVNARTDFQKDFAKYCVAEGLCEVKPPCPVNGMQVHSGETEILRKAVEDYFCFCYGKALGTTVMVPVPYEKMLRDQSAVVVQGLPEGVAFQHPENYDLATLKWILENKAGISFIINRPFLGPESQLGGPGMVTDAERSIVSPSESCGPINVKTEPMEDSGISLKAEAVSVKKESEDPNYYQYNMQGSHPSSTSNEVIEMELPMEDSTPLVPSEEPNEDPEAEVKIEGNTNSSSVTNSAAGVEDLNIVQVTVPDNEKERLSSIEKIKQLREQVNDLFSRKFGEAIGVDFPVKVPYRKITFNPGCVVIDGMPPGVVFKAPGYLEISSMRRILEAAEFIKFTVIRPLPGLELSNVGKRKIDQEGRVFQEKWERAYFFVEVQNIPTCLICKQSMSVSKEYNLRRHYQTNHSKHYDQYTERMRDEKLHELKKGLRKYLLGSSDTECPEQKQVFANPSPTQKSPVQPVEDLAGNLWEKLREKIRSFVAYSIAIDEITDINNTTQLAIFIRGVDENFDVSEELLDTVPMTGTKSGNEIFLRVEKSLKKFCINWSRLVSVASTGTPAMVDANNGLVTKLKSRVATFCKGAELKSICCIIHPESLCAQKLKMDHVMDVVVKSVNWICSRGLNHSEFTTLLYELDSQYGSLLYYTEIKWLSRGLVLKRFFESLEEIDSFMSSRGKPLPQLSSIDWIRDLAFLVDMTMHLNALNISLQGHSQIVTQMYDLIRAFLAKLCLWETHLTRNNLAHFPTLKLVSRNESDGLNYIPKIAELKTEFQKRLSDFKLYESELTLFSSPFSTKIDSVHEELQMEVIDLQCNTVLKTKYDKVGIPEFYKYLWGSYPKYKHHCAKILSMFGSTYICEQLFSIMKLSKTKYCSQLKDSQWDSVLHIAT</sequence>
<name>GTD2B_HUMAN</name>
<proteinExistence type="evidence at protein level"/>
<keyword id="KW-0002">3D-structure</keyword>
<keyword id="KW-0025">Alternative splicing</keyword>
<keyword id="KW-0238">DNA-binding</keyword>
<keyword id="KW-0539">Nucleus</keyword>
<keyword id="KW-1185">Reference proteome</keyword>
<keyword id="KW-0677">Repeat</keyword>
<keyword id="KW-0804">Transcription</keyword>
<keyword id="KW-0805">Transcription regulation</keyword>
<keyword id="KW-0856">Williams-Beuren syndrome</keyword>
<accession>Q6EKJ0</accession>
<accession>B2RNE9</accession>
<accession>Q69GU6</accession>
<accession>Q8N979</accession>
<accession>Q9H739</accession>
<feature type="chain" id="PRO_0000320121" description="General transcription factor II-I repeat domain-containing protein 2B">
    <location>
        <begin position="1"/>
        <end position="949"/>
    </location>
</feature>
<feature type="repeat" description="GTF2I-like 1">
    <location>
        <begin position="98"/>
        <end position="192"/>
    </location>
</feature>
<feature type="repeat" description="GTF2I-like 2">
    <location>
        <begin position="323"/>
        <end position="417"/>
    </location>
</feature>
<feature type="splice variant" id="VSP_031605" description="In isoform 2." evidence="3">
    <original>SCGPINVKTEPMEDSGIS</original>
    <variation>RHFTESRSCLSQERIRRS</variation>
    <location>
        <begin position="209"/>
        <end position="226"/>
    </location>
</feature>
<feature type="splice variant" id="VSP_031606" description="In isoform 2." evidence="3">
    <location>
        <begin position="227"/>
        <end position="949"/>
    </location>
</feature>
<feature type="sequence conflict" description="In Ref. 4; BAC04576." evidence="4" ref="4">
    <original>I</original>
    <variation>V</variation>
    <location>
        <position position="768"/>
    </location>
</feature>
<feature type="helix" evidence="5">
    <location>
        <begin position="108"/>
        <end position="123"/>
    </location>
</feature>
<feature type="helix" evidence="5">
    <location>
        <begin position="133"/>
        <end position="138"/>
    </location>
</feature>
<feature type="strand" evidence="5">
    <location>
        <begin position="140"/>
        <end position="147"/>
    </location>
</feature>
<feature type="turn" evidence="5">
    <location>
        <begin position="157"/>
        <end position="159"/>
    </location>
</feature>
<feature type="helix" evidence="5">
    <location>
        <begin position="162"/>
        <end position="170"/>
    </location>
</feature>
<feature type="strand" evidence="5">
    <location>
        <begin position="176"/>
        <end position="179"/>
    </location>
</feature>
<comment type="interaction">
    <interactant intactId="EBI-12338155">
        <id>Q6EKJ0</id>
    </interactant>
    <interactant intactId="EBI-2130429">
        <id>Q9BYV2</id>
        <label>TRIM54</label>
    </interactant>
    <organismsDiffer>false</organismsDiffer>
    <experiments>3</experiments>
</comment>
<comment type="subcellular location">
    <subcellularLocation>
        <location>Nucleus</location>
    </subcellularLocation>
</comment>
<comment type="alternative products">
    <event type="alternative splicing"/>
    <isoform>
        <id>Q6EKJ0-1</id>
        <name>1</name>
        <sequence type="displayed"/>
    </isoform>
    <isoform>
        <id>Q6EKJ0-2</id>
        <name>2</name>
        <sequence type="described" ref="VSP_031605 VSP_031606"/>
    </isoform>
</comment>
<comment type="tissue specificity">
    <text>Ubiquitous.</text>
</comment>
<comment type="disease">
    <text evidence="2">GTF2IRD2B is located in the Williams-Beuren syndrome (WBS) critical region. WBS results from a hemizygous deletion of several genes on chromosome 7q11.23, thought to arise as a consequence of unequal crossing over between highly homologous low-copy repeat sequences flanking the deleted region (PubMed:16532385).</text>
</comment>
<comment type="similarity">
    <text evidence="1">Belongs to the TFII-I family.</text>
</comment>
<comment type="sequence caution" evidence="4">
    <conflict type="erroneous initiation">
        <sequence resource="EMBL-CDS" id="BAB15060"/>
    </conflict>
</comment>
<comment type="sequence caution" evidence="4">
    <conflict type="erroneous initiation">
        <sequence resource="EMBL-CDS" id="BAC04576"/>
    </conflict>
</comment>